<organism>
    <name type="scientific">Aeromonas hydrophila subsp. hydrophila (strain ATCC 7966 / DSM 30187 / BCRC 13018 / CCUG 14551 / JCM 1027 / KCTC 2358 / NCIMB 9240 / NCTC 8049)</name>
    <dbReference type="NCBI Taxonomy" id="380703"/>
    <lineage>
        <taxon>Bacteria</taxon>
        <taxon>Pseudomonadati</taxon>
        <taxon>Pseudomonadota</taxon>
        <taxon>Gammaproteobacteria</taxon>
        <taxon>Aeromonadales</taxon>
        <taxon>Aeromonadaceae</taxon>
        <taxon>Aeromonas</taxon>
    </lineage>
</organism>
<evidence type="ECO:0000255" key="1">
    <source>
        <dbReference type="HAMAP-Rule" id="MF_01196"/>
    </source>
</evidence>
<evidence type="ECO:0000305" key="2"/>
<sequence>MHMSLEVLEQLESKVQSAVDNISLLKMELDELKEQNNKLQDENHQLRNEHVAWQERLRALLGKMDQMGESI</sequence>
<dbReference type="EMBL" id="CP000462">
    <property type="protein sequence ID" value="ABK38336.1"/>
    <property type="status" value="ALT_INIT"/>
    <property type="molecule type" value="Genomic_DNA"/>
</dbReference>
<dbReference type="RefSeq" id="YP_854727.1">
    <property type="nucleotide sequence ID" value="NC_008570.1"/>
</dbReference>
<dbReference type="SMR" id="A0KER2"/>
<dbReference type="STRING" id="380703.AHA_0194"/>
<dbReference type="EnsemblBacteria" id="ABK38336">
    <property type="protein sequence ID" value="ABK38336"/>
    <property type="gene ID" value="AHA_0194"/>
</dbReference>
<dbReference type="KEGG" id="aha:AHA_0194"/>
<dbReference type="PATRIC" id="fig|380703.7.peg.187"/>
<dbReference type="eggNOG" id="COG3074">
    <property type="taxonomic scope" value="Bacteria"/>
</dbReference>
<dbReference type="HOGENOM" id="CLU_1912608_0_0_6"/>
<dbReference type="OrthoDB" id="6554593at2"/>
<dbReference type="Proteomes" id="UP000000756">
    <property type="component" value="Chromosome"/>
</dbReference>
<dbReference type="GO" id="GO:0005737">
    <property type="term" value="C:cytoplasm"/>
    <property type="evidence" value="ECO:0007669"/>
    <property type="project" value="UniProtKB-SubCell"/>
</dbReference>
<dbReference type="GO" id="GO:0000917">
    <property type="term" value="P:division septum assembly"/>
    <property type="evidence" value="ECO:0007669"/>
    <property type="project" value="UniProtKB-KW"/>
</dbReference>
<dbReference type="GO" id="GO:0043093">
    <property type="term" value="P:FtsZ-dependent cytokinesis"/>
    <property type="evidence" value="ECO:0007669"/>
    <property type="project" value="UniProtKB-UniRule"/>
</dbReference>
<dbReference type="Gene3D" id="1.20.5.340">
    <property type="match status" value="1"/>
</dbReference>
<dbReference type="HAMAP" id="MF_01196">
    <property type="entry name" value="ZapB"/>
    <property type="match status" value="1"/>
</dbReference>
<dbReference type="InterPro" id="IPR009252">
    <property type="entry name" value="Cell_div_ZapB"/>
</dbReference>
<dbReference type="Pfam" id="PF06005">
    <property type="entry name" value="ZapB"/>
    <property type="match status" value="1"/>
</dbReference>
<name>ZAPB_AERHH</name>
<comment type="function">
    <text evidence="1">Non-essential, abundant cell division factor that is required for proper Z-ring formation. It is recruited early to the divisome by direct interaction with FtsZ, stimulating Z-ring assembly and thereby promoting cell division earlier in the cell cycle. Its recruitment to the Z-ring requires functional FtsA or ZipA.</text>
</comment>
<comment type="subunit">
    <text evidence="1">Homodimer. The ends of the coiled-coil dimer bind to each other, forming polymers. Interacts with FtsZ.</text>
</comment>
<comment type="subcellular location">
    <subcellularLocation>
        <location>Cytoplasm</location>
    </subcellularLocation>
    <text evidence="1">Localizes to the septum at mid-cell, in a FtsZ-like pattern.</text>
</comment>
<comment type="similarity">
    <text evidence="1">Belongs to the ZapB family.</text>
</comment>
<comment type="sequence caution" evidence="2">
    <conflict type="erroneous initiation">
        <sequence resource="EMBL-CDS" id="ABK38336"/>
    </conflict>
</comment>
<gene>
    <name evidence="1" type="primary">zapB</name>
    <name type="ordered locus">AHA_0194</name>
</gene>
<feature type="chain" id="PRO_0000333892" description="Cell division protein ZapB">
    <location>
        <begin position="1"/>
        <end position="71"/>
    </location>
</feature>
<feature type="coiled-coil region" evidence="1">
    <location>
        <begin position="5"/>
        <end position="67"/>
    </location>
</feature>
<accession>A0KER2</accession>
<reference key="1">
    <citation type="journal article" date="2006" name="J. Bacteriol.">
        <title>Genome sequence of Aeromonas hydrophila ATCC 7966T: jack of all trades.</title>
        <authorList>
            <person name="Seshadri R."/>
            <person name="Joseph S.W."/>
            <person name="Chopra A.K."/>
            <person name="Sha J."/>
            <person name="Shaw J."/>
            <person name="Graf J."/>
            <person name="Haft D.H."/>
            <person name="Wu M."/>
            <person name="Ren Q."/>
            <person name="Rosovitz M.J."/>
            <person name="Madupu R."/>
            <person name="Tallon L."/>
            <person name="Kim M."/>
            <person name="Jin S."/>
            <person name="Vuong H."/>
            <person name="Stine O.C."/>
            <person name="Ali A."/>
            <person name="Horneman A.J."/>
            <person name="Heidelberg J.F."/>
        </authorList>
    </citation>
    <scope>NUCLEOTIDE SEQUENCE [LARGE SCALE GENOMIC DNA]</scope>
    <source>
        <strain>ATCC 7966 / DSM 30187 / BCRC 13018 / CCUG 14551 / JCM 1027 / KCTC 2358 / NCIMB 9240 / NCTC 8049</strain>
    </source>
</reference>
<proteinExistence type="inferred from homology"/>
<protein>
    <recommendedName>
        <fullName evidence="1">Cell division protein ZapB</fullName>
    </recommendedName>
</protein>
<keyword id="KW-0131">Cell cycle</keyword>
<keyword id="KW-0132">Cell division</keyword>
<keyword id="KW-0175">Coiled coil</keyword>
<keyword id="KW-0963">Cytoplasm</keyword>
<keyword id="KW-1185">Reference proteome</keyword>
<keyword id="KW-0717">Septation</keyword>